<geneLocation type="plasmid"/>
<feature type="chain" id="PRO_0000218672" description="Colicin-5">
    <location>
        <begin position="1"/>
        <end position="490"/>
    </location>
</feature>
<feature type="transmembrane region" description="Helical" evidence="1">
    <location>
        <begin position="447"/>
        <end position="467"/>
    </location>
</feature>
<feature type="region of interest" description="Disordered" evidence="2">
    <location>
        <begin position="1"/>
        <end position="29"/>
    </location>
</feature>
<feature type="region of interest" description="Disordered" evidence="2">
    <location>
        <begin position="146"/>
        <end position="171"/>
    </location>
</feature>
<feature type="compositionally biased region" description="Polar residues" evidence="2">
    <location>
        <begin position="1"/>
        <end position="20"/>
    </location>
</feature>
<feature type="compositionally biased region" description="Basic and acidic residues" evidence="2">
    <location>
        <begin position="146"/>
        <end position="170"/>
    </location>
</feature>
<keyword id="KW-0044">Antibiotic</keyword>
<keyword id="KW-0929">Antimicrobial</keyword>
<keyword id="KW-0078">Bacteriocin</keyword>
<keyword id="KW-1043">Host membrane</keyword>
<keyword id="KW-0472">Membrane</keyword>
<keyword id="KW-0614">Plasmid</keyword>
<keyword id="KW-0812">Transmembrane</keyword>
<keyword id="KW-1133">Transmembrane helix</keyword>
<gene>
    <name type="primary">cfa</name>
</gene>
<comment type="function">
    <text>This colicin is a channel-forming colicin. This class of transmembrane toxins depolarize the cytoplasmic membrane, leading to dissipation of cellular energy.</text>
</comment>
<comment type="function">
    <text>Colicins are polypeptide toxins produced by and active against E.coli and closely related bacteria.</text>
</comment>
<comment type="subcellular location">
    <subcellularLocation>
        <location evidence="3">Host membrane</location>
    </subcellularLocation>
</comment>
<comment type="similarity">
    <text evidence="3">Belongs to the channel forming colicin family.</text>
</comment>
<accession>Q47500</accession>
<proteinExistence type="inferred from homology"/>
<reference key="1">
    <citation type="journal article" date="1995" name="J. Bacteriol.">
        <title>Evidence that the immunity protein inactivates colicin 5 immediately prior to the formation of the transmembrane channel.</title>
        <authorList>
            <person name="Pilsl H."/>
            <person name="Braun V."/>
        </authorList>
    </citation>
    <scope>NUCLEOTIDE SEQUENCE [GENOMIC DNA]</scope>
    <source>
        <strain>ATCC 35324 / ECOR 5</strain>
    </source>
</reference>
<organism>
    <name type="scientific">Escherichia coli</name>
    <dbReference type="NCBI Taxonomy" id="562"/>
    <lineage>
        <taxon>Bacteria</taxon>
        <taxon>Pseudomonadati</taxon>
        <taxon>Pseudomonadota</taxon>
        <taxon>Gammaproteobacteria</taxon>
        <taxon>Enterobacterales</taxon>
        <taxon>Enterobacteriaceae</taxon>
        <taxon>Escherichia</taxon>
    </lineage>
</organism>
<dbReference type="EMBL" id="X87835">
    <property type="protein sequence ID" value="CAA61102.1"/>
    <property type="molecule type" value="Genomic_DNA"/>
</dbReference>
<dbReference type="RefSeq" id="WP_000362089.1">
    <property type="nucleotide sequence ID" value="NZ_WMAT01000065.1"/>
</dbReference>
<dbReference type="SMR" id="Q47500"/>
<dbReference type="IntAct" id="Q47500">
    <property type="interactions" value="2"/>
</dbReference>
<dbReference type="PATRIC" id="fig|562.7401.peg.3224"/>
<dbReference type="GO" id="GO:0033644">
    <property type="term" value="C:host cell membrane"/>
    <property type="evidence" value="ECO:0007669"/>
    <property type="project" value="UniProtKB-SubCell"/>
</dbReference>
<dbReference type="GO" id="GO:0016020">
    <property type="term" value="C:membrane"/>
    <property type="evidence" value="ECO:0007669"/>
    <property type="project" value="UniProtKB-KW"/>
</dbReference>
<dbReference type="GO" id="GO:0140911">
    <property type="term" value="F:pore-forming activity"/>
    <property type="evidence" value="ECO:0007669"/>
    <property type="project" value="InterPro"/>
</dbReference>
<dbReference type="GO" id="GO:0050829">
    <property type="term" value="P:defense response to Gram-negative bacterium"/>
    <property type="evidence" value="ECO:0007669"/>
    <property type="project" value="InterPro"/>
</dbReference>
<dbReference type="GO" id="GO:0031640">
    <property type="term" value="P:killing of cells of another organism"/>
    <property type="evidence" value="ECO:0007669"/>
    <property type="project" value="UniProtKB-KW"/>
</dbReference>
<dbReference type="Gene3D" id="1.10.490.30">
    <property type="entry name" value="Colicin"/>
    <property type="match status" value="1"/>
</dbReference>
<dbReference type="Gene3D" id="1.10.287.620">
    <property type="entry name" value="Helix Hairpins"/>
    <property type="match status" value="1"/>
</dbReference>
<dbReference type="InterPro" id="IPR000293">
    <property type="entry name" value="Channel_colicin_C"/>
</dbReference>
<dbReference type="InterPro" id="IPR038283">
    <property type="entry name" value="Channel_colicin_C_sf"/>
</dbReference>
<dbReference type="Pfam" id="PF01024">
    <property type="entry name" value="Colicin"/>
    <property type="match status" value="1"/>
</dbReference>
<dbReference type="PRINTS" id="PR00280">
    <property type="entry name" value="CHANLCOLICIN"/>
</dbReference>
<dbReference type="SUPFAM" id="SSF56837">
    <property type="entry name" value="Colicin"/>
    <property type="match status" value="1"/>
</dbReference>
<dbReference type="PROSITE" id="PS00276">
    <property type="entry name" value="CHANNEL_COLICIN"/>
    <property type="match status" value="1"/>
</dbReference>
<protein>
    <recommendedName>
        <fullName>Colicin-5</fullName>
    </recommendedName>
</protein>
<sequence>MDKVTDNSPDVESTESTEGSFPTVGVDTGDTITATLATGTENVGGGGGAFGGASESSAAIHATAKWSTAQLKKHQAEQAARAAAAEAALAKAKSQRDALTQRLKDIVNDALRANAARSPSVTDLAHANNMAMQAEAERLRLAKAEQKAREEAEAAEKALREAERQRDEIARQQAETAHLLAMAEAAEAEKNRQDSLDEEHRAVEVAEKKLAEAKAELAKAESDVQSKQAIVSRVAGELENAQKSVDVKVTGFPGWRDVQKKLERQLQDKKNEYSSVTNALNSAVSIRDAKKTDVQNAEIKLKEAKDALEKSQVKDSVDTMVGFYQYITEQYGEKYSRIAQDLAEKAKGSKFSSVDEALAAFEKYKNVLDKKISKVDRDAIFNALESVNYDELSKNLTKISKSLKITSRVSFLYDVGSDFKNAIETGNWRPLFVTLEKSAVDVGVAKIVALMFSFIVGVPLGFWGIAIVTGIVSSYIGDDELNKLNELLGI</sequence>
<evidence type="ECO:0000255" key="1"/>
<evidence type="ECO:0000256" key="2">
    <source>
        <dbReference type="SAM" id="MobiDB-lite"/>
    </source>
</evidence>
<evidence type="ECO:0000305" key="3"/>
<name>CE05_ECOLX</name>